<proteinExistence type="inferred from homology"/>
<sequence>MNRLAVEIPGLSLKNPIMPASGCFGFGQEYSKYYDLNELGAIMAKAVTPEPRLGNPTPRVAETASGMLNAIGLQNPGLEHVLAHELPFLEQFETPIIANVAGATEDDYVQVCSRIGESKAVKAIELNISCPNVKHGGIAFGTDPEVAHRLTKAVKSVASVPVYVKLSPNVADIISIAQAIEAAGADGLTMINTLLGMRIDLKTRKPVIANGTGGLSGPAIKPVAIRMIHQVRAVSNIPIIGMGGVQTVDDVLEFLIAGADAVAVGTMNFTDPFICPKLITELPKRMDELGISSLQELKKELLNQ</sequence>
<protein>
    <recommendedName>
        <fullName>Dihydroorotate dehydrogenase B (NAD(+)), catalytic subunit</fullName>
        <shortName>DHOD B</shortName>
        <shortName>DHODase B</shortName>
        <shortName>DHOdehase B</shortName>
        <ecNumber>1.3.1.14</ecNumber>
    </recommendedName>
    <alternativeName>
        <fullName>Dihydroorotate oxidase B</fullName>
    </alternativeName>
    <alternativeName>
        <fullName>Orotate reductase (NADH)</fullName>
    </alternativeName>
</protein>
<evidence type="ECO:0000250" key="1"/>
<evidence type="ECO:0000305" key="2"/>
<comment type="function">
    <text evidence="1">Catalyzes the conversion of dihydroorotate to orotate with NAD(+) as electron acceptor.</text>
</comment>
<comment type="catalytic activity">
    <reaction>
        <text>(S)-dihydroorotate + NAD(+) = orotate + NADH + H(+)</text>
        <dbReference type="Rhea" id="RHEA:13513"/>
        <dbReference type="ChEBI" id="CHEBI:15378"/>
        <dbReference type="ChEBI" id="CHEBI:30839"/>
        <dbReference type="ChEBI" id="CHEBI:30864"/>
        <dbReference type="ChEBI" id="CHEBI:57540"/>
        <dbReference type="ChEBI" id="CHEBI:57945"/>
        <dbReference type="EC" id="1.3.1.14"/>
    </reaction>
</comment>
<comment type="cofactor">
    <cofactor evidence="1">
        <name>FMN</name>
        <dbReference type="ChEBI" id="CHEBI:58210"/>
    </cofactor>
    <text evidence="1">Binds 1 FMN per subunit.</text>
</comment>
<comment type="pathway">
    <text>Pyrimidine metabolism; UMP biosynthesis via de novo pathway; orotate from (S)-dihydroorotate (NAD(+) route): step 1/1.</text>
</comment>
<comment type="subunit">
    <text evidence="1">Heterotetramer of 2 PyrK and 2 PyrD type B subunits.</text>
</comment>
<comment type="subcellular location">
    <subcellularLocation>
        <location evidence="1">Cytoplasm</location>
    </subcellularLocation>
</comment>
<comment type="similarity">
    <text evidence="2">Belongs to the dihydroorotate dehydrogenase family. Type 1 subfamily.</text>
</comment>
<feature type="chain" id="PRO_0000148398" description="Dihydroorotate dehydrogenase B (NAD(+)), catalytic subunit">
    <location>
        <begin position="1"/>
        <end position="304"/>
    </location>
</feature>
<feature type="active site" description="Nucleophile">
    <location>
        <position position="130"/>
    </location>
</feature>
<feature type="binding site" evidence="1">
    <location>
        <position position="21"/>
    </location>
    <ligand>
        <name>FMN</name>
        <dbReference type="ChEBI" id="CHEBI:58210"/>
    </ligand>
</feature>
<feature type="binding site" evidence="1">
    <location>
        <begin position="45"/>
        <end position="46"/>
    </location>
    <ligand>
        <name>FMN</name>
        <dbReference type="ChEBI" id="CHEBI:58210"/>
    </ligand>
</feature>
<feature type="binding site" evidence="1">
    <location>
        <position position="45"/>
    </location>
    <ligand>
        <name>substrate</name>
    </ligand>
</feature>
<feature type="binding site" evidence="1">
    <location>
        <begin position="69"/>
        <end position="73"/>
    </location>
    <ligand>
        <name>substrate</name>
    </ligand>
</feature>
<feature type="binding site" evidence="1">
    <location>
        <position position="99"/>
    </location>
    <ligand>
        <name>FMN</name>
        <dbReference type="ChEBI" id="CHEBI:58210"/>
    </ligand>
</feature>
<feature type="binding site" evidence="1">
    <location>
        <position position="127"/>
    </location>
    <ligand>
        <name>FMN</name>
        <dbReference type="ChEBI" id="CHEBI:58210"/>
    </ligand>
</feature>
<feature type="binding site" evidence="1">
    <location>
        <position position="127"/>
    </location>
    <ligand>
        <name>substrate</name>
    </ligand>
</feature>
<feature type="binding site" evidence="1">
    <location>
        <position position="165"/>
    </location>
    <ligand>
        <name>FMN</name>
        <dbReference type="ChEBI" id="CHEBI:58210"/>
    </ligand>
</feature>
<feature type="binding site" evidence="1">
    <location>
        <position position="191"/>
    </location>
    <ligand>
        <name>FMN</name>
        <dbReference type="ChEBI" id="CHEBI:58210"/>
    </ligand>
</feature>
<feature type="binding site" evidence="1">
    <location>
        <begin position="192"/>
        <end position="193"/>
    </location>
    <ligand>
        <name>substrate</name>
    </ligand>
</feature>
<feature type="binding site" evidence="1">
    <location>
        <position position="217"/>
    </location>
    <ligand>
        <name>FMN</name>
        <dbReference type="ChEBI" id="CHEBI:58210"/>
    </ligand>
</feature>
<feature type="binding site" evidence="1">
    <location>
        <begin position="243"/>
        <end position="244"/>
    </location>
    <ligand>
        <name>FMN</name>
        <dbReference type="ChEBI" id="CHEBI:58210"/>
    </ligand>
</feature>
<feature type="binding site" evidence="1">
    <location>
        <begin position="265"/>
        <end position="266"/>
    </location>
    <ligand>
        <name>FMN</name>
        <dbReference type="ChEBI" id="CHEBI:58210"/>
    </ligand>
</feature>
<reference key="1">
    <citation type="journal article" date="2001" name="Science">
        <title>Comparative genomics of Listeria species.</title>
        <authorList>
            <person name="Glaser P."/>
            <person name="Frangeul L."/>
            <person name="Buchrieser C."/>
            <person name="Rusniok C."/>
            <person name="Amend A."/>
            <person name="Baquero F."/>
            <person name="Berche P."/>
            <person name="Bloecker H."/>
            <person name="Brandt P."/>
            <person name="Chakraborty T."/>
            <person name="Charbit A."/>
            <person name="Chetouani F."/>
            <person name="Couve E."/>
            <person name="de Daruvar A."/>
            <person name="Dehoux P."/>
            <person name="Domann E."/>
            <person name="Dominguez-Bernal G."/>
            <person name="Duchaud E."/>
            <person name="Durant L."/>
            <person name="Dussurget O."/>
            <person name="Entian K.-D."/>
            <person name="Fsihi H."/>
            <person name="Garcia-del Portillo F."/>
            <person name="Garrido P."/>
            <person name="Gautier L."/>
            <person name="Goebel W."/>
            <person name="Gomez-Lopez N."/>
            <person name="Hain T."/>
            <person name="Hauf J."/>
            <person name="Jackson D."/>
            <person name="Jones L.-M."/>
            <person name="Kaerst U."/>
            <person name="Kreft J."/>
            <person name="Kuhn M."/>
            <person name="Kunst F."/>
            <person name="Kurapkat G."/>
            <person name="Madueno E."/>
            <person name="Maitournam A."/>
            <person name="Mata Vicente J."/>
            <person name="Ng E."/>
            <person name="Nedjari H."/>
            <person name="Nordsiek G."/>
            <person name="Novella S."/>
            <person name="de Pablos B."/>
            <person name="Perez-Diaz J.-C."/>
            <person name="Purcell R."/>
            <person name="Remmel B."/>
            <person name="Rose M."/>
            <person name="Schlueter T."/>
            <person name="Simoes N."/>
            <person name="Tierrez A."/>
            <person name="Vazquez-Boland J.-A."/>
            <person name="Voss H."/>
            <person name="Wehland J."/>
            <person name="Cossart P."/>
        </authorList>
    </citation>
    <scope>NUCLEOTIDE SEQUENCE [LARGE SCALE GENOMIC DNA]</scope>
    <source>
        <strain>ATCC BAA-680 / CLIP 11262</strain>
    </source>
</reference>
<accession>Q92AH5</accession>
<gene>
    <name type="primary">pyrD</name>
    <name type="ordered locus">lin1947</name>
</gene>
<keyword id="KW-0963">Cytoplasm</keyword>
<keyword id="KW-0285">Flavoprotein</keyword>
<keyword id="KW-0288">FMN</keyword>
<keyword id="KW-0520">NAD</keyword>
<keyword id="KW-0560">Oxidoreductase</keyword>
<keyword id="KW-0665">Pyrimidine biosynthesis</keyword>
<dbReference type="EC" id="1.3.1.14"/>
<dbReference type="EMBL" id="AL596170">
    <property type="protein sequence ID" value="CAC97177.1"/>
    <property type="molecule type" value="Genomic_DNA"/>
</dbReference>
<dbReference type="PIR" id="AI1675">
    <property type="entry name" value="AI1675"/>
</dbReference>
<dbReference type="RefSeq" id="WP_003762958.1">
    <property type="nucleotide sequence ID" value="NC_003212.1"/>
</dbReference>
<dbReference type="SMR" id="Q92AH5"/>
<dbReference type="STRING" id="272626.gene:17566305"/>
<dbReference type="GeneID" id="93235285"/>
<dbReference type="KEGG" id="lin:pyrD"/>
<dbReference type="eggNOG" id="COG0167">
    <property type="taxonomic scope" value="Bacteria"/>
</dbReference>
<dbReference type="HOGENOM" id="CLU_042042_0_0_9"/>
<dbReference type="OrthoDB" id="9794954at2"/>
<dbReference type="UniPathway" id="UPA00070">
    <property type="reaction ID" value="UER00945"/>
</dbReference>
<dbReference type="Proteomes" id="UP000002513">
    <property type="component" value="Chromosome"/>
</dbReference>
<dbReference type="GO" id="GO:0005737">
    <property type="term" value="C:cytoplasm"/>
    <property type="evidence" value="ECO:0007669"/>
    <property type="project" value="UniProtKB-SubCell"/>
</dbReference>
<dbReference type="GO" id="GO:0004589">
    <property type="term" value="F:dihydroorotate dehydrogenase (NAD+) activity"/>
    <property type="evidence" value="ECO:0007669"/>
    <property type="project" value="UniProtKB-EC"/>
</dbReference>
<dbReference type="GO" id="GO:0006207">
    <property type="term" value="P:'de novo' pyrimidine nucleobase biosynthetic process"/>
    <property type="evidence" value="ECO:0007669"/>
    <property type="project" value="InterPro"/>
</dbReference>
<dbReference type="GO" id="GO:0044205">
    <property type="term" value="P:'de novo' UMP biosynthetic process"/>
    <property type="evidence" value="ECO:0007669"/>
    <property type="project" value="UniProtKB-UniRule"/>
</dbReference>
<dbReference type="CDD" id="cd04740">
    <property type="entry name" value="DHOD_1B_like"/>
    <property type="match status" value="1"/>
</dbReference>
<dbReference type="FunFam" id="3.20.20.70:FF:000069">
    <property type="entry name" value="Dihydroorotate dehydrogenase"/>
    <property type="match status" value="1"/>
</dbReference>
<dbReference type="Gene3D" id="3.20.20.70">
    <property type="entry name" value="Aldolase class I"/>
    <property type="match status" value="1"/>
</dbReference>
<dbReference type="HAMAP" id="MF_00224">
    <property type="entry name" value="DHO_dh_type1"/>
    <property type="match status" value="1"/>
</dbReference>
<dbReference type="InterPro" id="IPR013785">
    <property type="entry name" value="Aldolase_TIM"/>
</dbReference>
<dbReference type="InterPro" id="IPR050074">
    <property type="entry name" value="DHO_dehydrogenase"/>
</dbReference>
<dbReference type="InterPro" id="IPR033888">
    <property type="entry name" value="DHOD_1B"/>
</dbReference>
<dbReference type="InterPro" id="IPR024920">
    <property type="entry name" value="Dihydroorotate_DH_1"/>
</dbReference>
<dbReference type="InterPro" id="IPR012135">
    <property type="entry name" value="Dihydroorotate_DH_1_2"/>
</dbReference>
<dbReference type="InterPro" id="IPR005720">
    <property type="entry name" value="Dihydroorotate_DH_cat"/>
</dbReference>
<dbReference type="InterPro" id="IPR001295">
    <property type="entry name" value="Dihydroorotate_DH_CS"/>
</dbReference>
<dbReference type="InterPro" id="IPR049622">
    <property type="entry name" value="Dihydroorotate_DH_I"/>
</dbReference>
<dbReference type="NCBIfam" id="NF005574">
    <property type="entry name" value="PRK07259.1"/>
    <property type="match status" value="1"/>
</dbReference>
<dbReference type="NCBIfam" id="TIGR01037">
    <property type="entry name" value="pyrD_sub1_fam"/>
    <property type="match status" value="1"/>
</dbReference>
<dbReference type="PANTHER" id="PTHR48109:SF1">
    <property type="entry name" value="DIHYDROOROTATE DEHYDROGENASE (FUMARATE)"/>
    <property type="match status" value="1"/>
</dbReference>
<dbReference type="PANTHER" id="PTHR48109">
    <property type="entry name" value="DIHYDROOROTATE DEHYDROGENASE (QUINONE), MITOCHONDRIAL-RELATED"/>
    <property type="match status" value="1"/>
</dbReference>
<dbReference type="Pfam" id="PF01180">
    <property type="entry name" value="DHO_dh"/>
    <property type="match status" value="1"/>
</dbReference>
<dbReference type="PIRSF" id="PIRSF000164">
    <property type="entry name" value="DHO_oxidase"/>
    <property type="match status" value="1"/>
</dbReference>
<dbReference type="SUPFAM" id="SSF51395">
    <property type="entry name" value="FMN-linked oxidoreductases"/>
    <property type="match status" value="1"/>
</dbReference>
<dbReference type="PROSITE" id="PS00911">
    <property type="entry name" value="DHODEHASE_1"/>
    <property type="match status" value="1"/>
</dbReference>
<dbReference type="PROSITE" id="PS00912">
    <property type="entry name" value="DHODEHASE_2"/>
    <property type="match status" value="1"/>
</dbReference>
<name>PYRDB_LISIN</name>
<organism>
    <name type="scientific">Listeria innocua serovar 6a (strain ATCC BAA-680 / CLIP 11262)</name>
    <dbReference type="NCBI Taxonomy" id="272626"/>
    <lineage>
        <taxon>Bacteria</taxon>
        <taxon>Bacillati</taxon>
        <taxon>Bacillota</taxon>
        <taxon>Bacilli</taxon>
        <taxon>Bacillales</taxon>
        <taxon>Listeriaceae</taxon>
        <taxon>Listeria</taxon>
    </lineage>
</organism>